<sequence>MIDETLLEGEEKMQKAVEVAKDELATVRTGRANPAMFSGIVVDYYGSPTPLNQLASISVPEARLVVIKPYDASQLGAMEKAIRDSDLGVNPSNDGQLIRVSIPQMTEERRKEMVKLAKHKGEEGRITVRGIRRKVKEEIDRIVKDGEAGEDEGTRGEKELENLTHRYVAQIDELVKHKEAELLEV</sequence>
<comment type="function">
    <text evidence="1">Responsible for the release of ribosomes from messenger RNA at the termination of protein biosynthesis. May increase the efficiency of translation by recycling ribosomes from one round of translation to another.</text>
</comment>
<comment type="subcellular location">
    <subcellularLocation>
        <location evidence="1">Cytoplasm</location>
    </subcellularLocation>
</comment>
<comment type="similarity">
    <text evidence="1">Belongs to the RRF family.</text>
</comment>
<reference key="1">
    <citation type="journal article" date="2007" name="Nat. Biotechnol.">
        <title>Complete genome sequence of the erythromycin-producing bacterium Saccharopolyspora erythraea NRRL23338.</title>
        <authorList>
            <person name="Oliynyk M."/>
            <person name="Samborskyy M."/>
            <person name="Lester J.B."/>
            <person name="Mironenko T."/>
            <person name="Scott N."/>
            <person name="Dickens S."/>
            <person name="Haydock S.F."/>
            <person name="Leadlay P.F."/>
        </authorList>
    </citation>
    <scope>NUCLEOTIDE SEQUENCE [LARGE SCALE GENOMIC DNA]</scope>
    <source>
        <strain>ATCC 11635 / DSM 40517 / JCM 4748 / NBRC 13426 / NCIMB 8594 / NRRL 2338</strain>
    </source>
</reference>
<protein>
    <recommendedName>
        <fullName evidence="1">Ribosome-recycling factor</fullName>
        <shortName evidence="1">RRF</shortName>
    </recommendedName>
    <alternativeName>
        <fullName evidence="1">Ribosome-releasing factor</fullName>
    </alternativeName>
</protein>
<name>RRF_SACEN</name>
<keyword id="KW-0963">Cytoplasm</keyword>
<keyword id="KW-0648">Protein biosynthesis</keyword>
<keyword id="KW-1185">Reference proteome</keyword>
<evidence type="ECO:0000255" key="1">
    <source>
        <dbReference type="HAMAP-Rule" id="MF_00040"/>
    </source>
</evidence>
<accession>A4FMD4</accession>
<proteinExistence type="inferred from homology"/>
<gene>
    <name evidence="1" type="primary">frr</name>
    <name type="ordered locus">SACE_6035</name>
</gene>
<dbReference type="EMBL" id="AM420293">
    <property type="protein sequence ID" value="CAM05209.1"/>
    <property type="molecule type" value="Genomic_DNA"/>
</dbReference>
<dbReference type="RefSeq" id="WP_009943637.1">
    <property type="nucleotide sequence ID" value="NC_009142.1"/>
</dbReference>
<dbReference type="SMR" id="A4FMD4"/>
<dbReference type="STRING" id="405948.SACE_6035"/>
<dbReference type="KEGG" id="sen:SACE_6035"/>
<dbReference type="eggNOG" id="COG0233">
    <property type="taxonomic scope" value="Bacteria"/>
</dbReference>
<dbReference type="HOGENOM" id="CLU_073981_2_0_11"/>
<dbReference type="OrthoDB" id="9804006at2"/>
<dbReference type="Proteomes" id="UP000006728">
    <property type="component" value="Chromosome"/>
</dbReference>
<dbReference type="GO" id="GO:0005737">
    <property type="term" value="C:cytoplasm"/>
    <property type="evidence" value="ECO:0007669"/>
    <property type="project" value="UniProtKB-SubCell"/>
</dbReference>
<dbReference type="GO" id="GO:0043023">
    <property type="term" value="F:ribosomal large subunit binding"/>
    <property type="evidence" value="ECO:0007669"/>
    <property type="project" value="TreeGrafter"/>
</dbReference>
<dbReference type="GO" id="GO:0006415">
    <property type="term" value="P:translational termination"/>
    <property type="evidence" value="ECO:0007669"/>
    <property type="project" value="UniProtKB-UniRule"/>
</dbReference>
<dbReference type="CDD" id="cd00520">
    <property type="entry name" value="RRF"/>
    <property type="match status" value="1"/>
</dbReference>
<dbReference type="FunFam" id="1.10.132.20:FF:000001">
    <property type="entry name" value="Ribosome-recycling factor"/>
    <property type="match status" value="1"/>
</dbReference>
<dbReference type="FunFam" id="3.30.1360.40:FF:000001">
    <property type="entry name" value="Ribosome-recycling factor"/>
    <property type="match status" value="1"/>
</dbReference>
<dbReference type="Gene3D" id="3.30.1360.40">
    <property type="match status" value="1"/>
</dbReference>
<dbReference type="Gene3D" id="1.10.132.20">
    <property type="entry name" value="Ribosome-recycling factor"/>
    <property type="match status" value="1"/>
</dbReference>
<dbReference type="HAMAP" id="MF_00040">
    <property type="entry name" value="RRF"/>
    <property type="match status" value="1"/>
</dbReference>
<dbReference type="InterPro" id="IPR002661">
    <property type="entry name" value="Ribosome_recyc_fac"/>
</dbReference>
<dbReference type="InterPro" id="IPR023584">
    <property type="entry name" value="Ribosome_recyc_fac_dom"/>
</dbReference>
<dbReference type="InterPro" id="IPR036191">
    <property type="entry name" value="RRF_sf"/>
</dbReference>
<dbReference type="NCBIfam" id="TIGR00496">
    <property type="entry name" value="frr"/>
    <property type="match status" value="1"/>
</dbReference>
<dbReference type="PANTHER" id="PTHR20982:SF3">
    <property type="entry name" value="MITOCHONDRIAL RIBOSOME RECYCLING FACTOR PSEUDO 1"/>
    <property type="match status" value="1"/>
</dbReference>
<dbReference type="PANTHER" id="PTHR20982">
    <property type="entry name" value="RIBOSOME RECYCLING FACTOR"/>
    <property type="match status" value="1"/>
</dbReference>
<dbReference type="Pfam" id="PF01765">
    <property type="entry name" value="RRF"/>
    <property type="match status" value="1"/>
</dbReference>
<dbReference type="SUPFAM" id="SSF55194">
    <property type="entry name" value="Ribosome recycling factor, RRF"/>
    <property type="match status" value="1"/>
</dbReference>
<feature type="chain" id="PRO_1000003254" description="Ribosome-recycling factor">
    <location>
        <begin position="1"/>
        <end position="185"/>
    </location>
</feature>
<organism>
    <name type="scientific">Saccharopolyspora erythraea (strain ATCC 11635 / DSM 40517 / JCM 4748 / NBRC 13426 / NCIMB 8594 / NRRL 2338)</name>
    <dbReference type="NCBI Taxonomy" id="405948"/>
    <lineage>
        <taxon>Bacteria</taxon>
        <taxon>Bacillati</taxon>
        <taxon>Actinomycetota</taxon>
        <taxon>Actinomycetes</taxon>
        <taxon>Pseudonocardiales</taxon>
        <taxon>Pseudonocardiaceae</taxon>
        <taxon>Saccharopolyspora</taxon>
    </lineage>
</organism>